<comment type="similarity">
    <text evidence="1">Belongs to the UPF0502 family.</text>
</comment>
<keyword id="KW-1185">Reference proteome</keyword>
<accession>Q88K50</accession>
<proteinExistence type="inferred from homology"/>
<dbReference type="EMBL" id="AE015451">
    <property type="protein sequence ID" value="AAN68054.1"/>
    <property type="molecule type" value="Genomic_DNA"/>
</dbReference>
<dbReference type="RefSeq" id="NP_744590.1">
    <property type="nucleotide sequence ID" value="NC_002947.4"/>
</dbReference>
<dbReference type="RefSeq" id="WP_010953392.1">
    <property type="nucleotide sequence ID" value="NZ_CP169744.1"/>
</dbReference>
<dbReference type="SMR" id="Q88K50"/>
<dbReference type="STRING" id="160488.PP_2442"/>
<dbReference type="PaxDb" id="160488-PP_2442"/>
<dbReference type="KEGG" id="ppu:PP_2442"/>
<dbReference type="PATRIC" id="fig|160488.4.peg.2587"/>
<dbReference type="eggNOG" id="COG3132">
    <property type="taxonomic scope" value="Bacteria"/>
</dbReference>
<dbReference type="HOGENOM" id="CLU_057831_2_0_6"/>
<dbReference type="OrthoDB" id="9784785at2"/>
<dbReference type="PhylomeDB" id="Q88K50"/>
<dbReference type="BioCyc" id="PPUT160488:G1G01-2609-MONOMER"/>
<dbReference type="Proteomes" id="UP000000556">
    <property type="component" value="Chromosome"/>
</dbReference>
<dbReference type="Gene3D" id="1.10.10.10">
    <property type="entry name" value="Winged helix-like DNA-binding domain superfamily/Winged helix DNA-binding domain"/>
    <property type="match status" value="2"/>
</dbReference>
<dbReference type="HAMAP" id="MF_01584">
    <property type="entry name" value="UPF0502"/>
    <property type="match status" value="1"/>
</dbReference>
<dbReference type="InterPro" id="IPR007432">
    <property type="entry name" value="DUF480"/>
</dbReference>
<dbReference type="InterPro" id="IPR036388">
    <property type="entry name" value="WH-like_DNA-bd_sf"/>
</dbReference>
<dbReference type="InterPro" id="IPR036390">
    <property type="entry name" value="WH_DNA-bd_sf"/>
</dbReference>
<dbReference type="PANTHER" id="PTHR38768">
    <property type="entry name" value="UPF0502 PROTEIN YCEH"/>
    <property type="match status" value="1"/>
</dbReference>
<dbReference type="PANTHER" id="PTHR38768:SF1">
    <property type="entry name" value="UPF0502 PROTEIN YCEH"/>
    <property type="match status" value="1"/>
</dbReference>
<dbReference type="Pfam" id="PF04337">
    <property type="entry name" value="DUF480"/>
    <property type="match status" value="1"/>
</dbReference>
<dbReference type="SUPFAM" id="SSF46785">
    <property type="entry name" value="Winged helix' DNA-binding domain"/>
    <property type="match status" value="2"/>
</dbReference>
<sequence length="215" mass="23851">MSEHETAGEGRFNSIEIRVLGSLIEKQATSPESYPLTLNALVLACNQKTSREPVMNLTQGQVGQALRALEGQGMTRLQMGSRADRWEHRVDKALELVPAQLVLMGLMFLRGPQTLNELLTRSNRLHDFDDTEQIQHQLERLISRDLALHLPRQAGQREDRYTHALGDPAEIEAILAARQQEGGARTSGGSVSEDRIEALEARIAALEARLAELEG</sequence>
<name>Y2442_PSEPK</name>
<feature type="chain" id="PRO_0000309407" description="UPF0502 protein PP_2442">
    <location>
        <begin position="1"/>
        <end position="215"/>
    </location>
</feature>
<gene>
    <name type="ordered locus">PP_2442</name>
</gene>
<protein>
    <recommendedName>
        <fullName evidence="1">UPF0502 protein PP_2442</fullName>
    </recommendedName>
</protein>
<reference key="1">
    <citation type="journal article" date="2002" name="Environ. Microbiol.">
        <title>Complete genome sequence and comparative analysis of the metabolically versatile Pseudomonas putida KT2440.</title>
        <authorList>
            <person name="Nelson K.E."/>
            <person name="Weinel C."/>
            <person name="Paulsen I.T."/>
            <person name="Dodson R.J."/>
            <person name="Hilbert H."/>
            <person name="Martins dos Santos V.A.P."/>
            <person name="Fouts D.E."/>
            <person name="Gill S.R."/>
            <person name="Pop M."/>
            <person name="Holmes M."/>
            <person name="Brinkac L.M."/>
            <person name="Beanan M.J."/>
            <person name="DeBoy R.T."/>
            <person name="Daugherty S.C."/>
            <person name="Kolonay J.F."/>
            <person name="Madupu R."/>
            <person name="Nelson W.C."/>
            <person name="White O."/>
            <person name="Peterson J.D."/>
            <person name="Khouri H.M."/>
            <person name="Hance I."/>
            <person name="Chris Lee P."/>
            <person name="Holtzapple E.K."/>
            <person name="Scanlan D."/>
            <person name="Tran K."/>
            <person name="Moazzez A."/>
            <person name="Utterback T.R."/>
            <person name="Rizzo M."/>
            <person name="Lee K."/>
            <person name="Kosack D."/>
            <person name="Moestl D."/>
            <person name="Wedler H."/>
            <person name="Lauber J."/>
            <person name="Stjepandic D."/>
            <person name="Hoheisel J."/>
            <person name="Straetz M."/>
            <person name="Heim S."/>
            <person name="Kiewitz C."/>
            <person name="Eisen J.A."/>
            <person name="Timmis K.N."/>
            <person name="Duesterhoeft A."/>
            <person name="Tuemmler B."/>
            <person name="Fraser C.M."/>
        </authorList>
    </citation>
    <scope>NUCLEOTIDE SEQUENCE [LARGE SCALE GENOMIC DNA]</scope>
    <source>
        <strain>ATCC 47054 / DSM 6125 / CFBP 8728 / NCIMB 11950 / KT2440</strain>
    </source>
</reference>
<organism>
    <name type="scientific">Pseudomonas putida (strain ATCC 47054 / DSM 6125 / CFBP 8728 / NCIMB 11950 / KT2440)</name>
    <dbReference type="NCBI Taxonomy" id="160488"/>
    <lineage>
        <taxon>Bacteria</taxon>
        <taxon>Pseudomonadati</taxon>
        <taxon>Pseudomonadota</taxon>
        <taxon>Gammaproteobacteria</taxon>
        <taxon>Pseudomonadales</taxon>
        <taxon>Pseudomonadaceae</taxon>
        <taxon>Pseudomonas</taxon>
    </lineage>
</organism>
<evidence type="ECO:0000255" key="1">
    <source>
        <dbReference type="HAMAP-Rule" id="MF_01584"/>
    </source>
</evidence>